<proteinExistence type="evidence at protein level"/>
<dbReference type="EMBL" id="X98884">
    <property type="protein sequence ID" value="CAA67387.1"/>
    <property type="molecule type" value="mRNA"/>
</dbReference>
<dbReference type="PIR" id="T30334">
    <property type="entry name" value="T30334"/>
</dbReference>
<dbReference type="SMR" id="O13046"/>
<dbReference type="IntAct" id="O13046">
    <property type="interactions" value="5"/>
</dbReference>
<dbReference type="MINT" id="O13046"/>
<dbReference type="AGR" id="Xenbase:XB-GENE-1217712"/>
<dbReference type="Xenbase" id="XB-GENE-1217712">
    <property type="gene designation" value="wdhd1.L"/>
</dbReference>
<dbReference type="OrthoDB" id="427368at2759"/>
<dbReference type="Proteomes" id="UP000186698">
    <property type="component" value="Unplaced"/>
</dbReference>
<dbReference type="GO" id="GO:0005737">
    <property type="term" value="C:cytoplasm"/>
    <property type="evidence" value="ECO:0007669"/>
    <property type="project" value="UniProtKB-SubCell"/>
</dbReference>
<dbReference type="GO" id="GO:0043596">
    <property type="term" value="C:nuclear replication fork"/>
    <property type="evidence" value="ECO:0000318"/>
    <property type="project" value="GO_Central"/>
</dbReference>
<dbReference type="GO" id="GO:0005654">
    <property type="term" value="C:nucleoplasm"/>
    <property type="evidence" value="ECO:0007669"/>
    <property type="project" value="UniProtKB-SubCell"/>
</dbReference>
<dbReference type="GO" id="GO:0003682">
    <property type="term" value="F:chromatin binding"/>
    <property type="evidence" value="ECO:0000318"/>
    <property type="project" value="GO_Central"/>
</dbReference>
<dbReference type="GO" id="GO:0003677">
    <property type="term" value="F:DNA binding"/>
    <property type="evidence" value="ECO:0007669"/>
    <property type="project" value="UniProtKB-KW"/>
</dbReference>
<dbReference type="GO" id="GO:0006281">
    <property type="term" value="P:DNA repair"/>
    <property type="evidence" value="ECO:0000318"/>
    <property type="project" value="GO_Central"/>
</dbReference>
<dbReference type="GO" id="GO:0006261">
    <property type="term" value="P:DNA-templated DNA replication"/>
    <property type="evidence" value="ECO:0000318"/>
    <property type="project" value="GO_Central"/>
</dbReference>
<dbReference type="GO" id="GO:0000278">
    <property type="term" value="P:mitotic cell cycle"/>
    <property type="evidence" value="ECO:0000318"/>
    <property type="project" value="GO_Central"/>
</dbReference>
<dbReference type="CDD" id="cd21993">
    <property type="entry name" value="HMG-box_WDHD1"/>
    <property type="match status" value="1"/>
</dbReference>
<dbReference type="CDD" id="cd00200">
    <property type="entry name" value="WD40"/>
    <property type="match status" value="1"/>
</dbReference>
<dbReference type="FunFam" id="1.10.30.10:FF:000028">
    <property type="entry name" value="WD repeat and HMG-box DNA-binding protein 1"/>
    <property type="match status" value="1"/>
</dbReference>
<dbReference type="FunFam" id="2.130.10.10:FF:001715">
    <property type="entry name" value="WD repeat and HMG-box DNA-binding protein 1"/>
    <property type="match status" value="1"/>
</dbReference>
<dbReference type="Gene3D" id="1.10.30.10">
    <property type="entry name" value="High mobility group box domain"/>
    <property type="match status" value="1"/>
</dbReference>
<dbReference type="Gene3D" id="2.130.10.10">
    <property type="entry name" value="YVTN repeat-like/Quinoprotein amine dehydrogenase"/>
    <property type="match status" value="2"/>
</dbReference>
<dbReference type="InterPro" id="IPR055339">
    <property type="entry name" value="HMG-box_WDHD1"/>
</dbReference>
<dbReference type="InterPro" id="IPR009071">
    <property type="entry name" value="HMG_box_dom"/>
</dbReference>
<dbReference type="InterPro" id="IPR036910">
    <property type="entry name" value="HMG_box_dom_sf"/>
</dbReference>
<dbReference type="InterPro" id="IPR015943">
    <property type="entry name" value="WD40/YVTN_repeat-like_dom_sf"/>
</dbReference>
<dbReference type="InterPro" id="IPR019775">
    <property type="entry name" value="WD40_repeat_CS"/>
</dbReference>
<dbReference type="InterPro" id="IPR036322">
    <property type="entry name" value="WD40_repeat_dom_sf"/>
</dbReference>
<dbReference type="InterPro" id="IPR001680">
    <property type="entry name" value="WD40_rpt"/>
</dbReference>
<dbReference type="InterPro" id="IPR022100">
    <property type="entry name" value="WDHD1/CFT4_beta-prop_2nd"/>
</dbReference>
<dbReference type="InterPro" id="IPR048591">
    <property type="entry name" value="WDHD1/CFT4_hel"/>
</dbReference>
<dbReference type="PANTHER" id="PTHR19932">
    <property type="entry name" value="WD REPEAT AND HMG-BOX DNA BINDING PROTEIN"/>
    <property type="match status" value="1"/>
</dbReference>
<dbReference type="PANTHER" id="PTHR19932:SF10">
    <property type="entry name" value="WD REPEAT AND HMG-BOX DNA-BINDING PROTEIN 1"/>
    <property type="match status" value="1"/>
</dbReference>
<dbReference type="Pfam" id="PF20946">
    <property type="entry name" value="Ctf4_C"/>
    <property type="match status" value="1"/>
</dbReference>
<dbReference type="Pfam" id="PF24815">
    <property type="entry name" value="HMG_WDHD1"/>
    <property type="match status" value="1"/>
</dbReference>
<dbReference type="Pfam" id="PF12341">
    <property type="entry name" value="Mcl1_mid"/>
    <property type="match status" value="1"/>
</dbReference>
<dbReference type="Pfam" id="PF24817">
    <property type="entry name" value="WD40_WDHD1_1st"/>
    <property type="match status" value="1"/>
</dbReference>
<dbReference type="SMART" id="SM00398">
    <property type="entry name" value="HMG"/>
    <property type="match status" value="1"/>
</dbReference>
<dbReference type="SMART" id="SM00320">
    <property type="entry name" value="WD40"/>
    <property type="match status" value="5"/>
</dbReference>
<dbReference type="SUPFAM" id="SSF47095">
    <property type="entry name" value="HMG-box"/>
    <property type="match status" value="1"/>
</dbReference>
<dbReference type="SUPFAM" id="SSF50978">
    <property type="entry name" value="WD40 repeat-like"/>
    <property type="match status" value="1"/>
</dbReference>
<dbReference type="PROSITE" id="PS50118">
    <property type="entry name" value="HMG_BOX_2"/>
    <property type="match status" value="1"/>
</dbReference>
<dbReference type="PROSITE" id="PS00678">
    <property type="entry name" value="WD_REPEATS_1"/>
    <property type="match status" value="2"/>
</dbReference>
<dbReference type="PROSITE" id="PS50082">
    <property type="entry name" value="WD_REPEATS_2"/>
    <property type="match status" value="3"/>
</dbReference>
<dbReference type="PROSITE" id="PS50294">
    <property type="entry name" value="WD_REPEATS_REGION"/>
    <property type="match status" value="1"/>
</dbReference>
<reference key="1">
    <citation type="journal article" date="1997" name="J. Cell Sci.">
        <title>AND-1, a natural chimeric DNA-binding protein, combines an HMG-box with regulatory WD-repeats.</title>
        <authorList>
            <person name="Koehler A."/>
            <person name="Schmidt-Zachmann M.S."/>
            <person name="Franke W.W."/>
        </authorList>
    </citation>
    <scope>NUCLEOTIDE SEQUENCE [MRNA]</scope>
    <scope>SUBCELLULAR LOCATION</scope>
    <scope>SUBUNIT</scope>
    <scope>DNA-BINDING</scope>
    <source>
        <tissue>Oocyte</tissue>
    </source>
</reference>
<protein>
    <recommendedName>
        <fullName>WD repeat and HMG-box DNA-binding protein 1</fullName>
    </recommendedName>
    <alternativeName>
        <fullName>Acidic nucleoplasmic DNA-binding protein 1</fullName>
        <shortName>And-1</shortName>
    </alternativeName>
</protein>
<comment type="function">
    <text evidence="1">Core replisome component that acts as a replication initiation factor. Binds directly to the CMG complex and functions as a hub to recruit additional proteins to the replication fork.</text>
</comment>
<comment type="subunit">
    <text evidence="5">Homodimer.</text>
</comment>
<comment type="interaction">
    <interactant intactId="EBI-3510652">
        <id>O13046</id>
    </interactant>
    <interactant intactId="EBI-3645423">
        <id>Q9DE46</id>
        <label>pola1</label>
    </interactant>
    <organismsDiffer>false</organismsDiffer>
    <experiments>2</experiments>
</comment>
<comment type="interaction">
    <interactant intactId="EBI-3510652">
        <id>O13046</id>
    </interactant>
    <interactant intactId="EBI-7570880">
        <id>Q0IHI4</id>
        <label>tipin</label>
    </interactant>
    <organismsDiffer>false</organismsDiffer>
    <experiments>5</experiments>
</comment>
<comment type="subcellular location">
    <subcellularLocation>
        <location evidence="4">Nucleus</location>
        <location evidence="4">Nucleoplasm</location>
    </subcellularLocation>
    <subcellularLocation>
        <location evidence="4">Cytoplasm</location>
    </subcellularLocation>
    <text>Transiently cytoplasmic during mitosis.</text>
</comment>
<comment type="tissue specificity">
    <text>Found in oocytes and in various other cells.</text>
</comment>
<evidence type="ECO:0000250" key="1">
    <source>
        <dbReference type="UniProtKB" id="O75717"/>
    </source>
</evidence>
<evidence type="ECO:0000255" key="2">
    <source>
        <dbReference type="PROSITE-ProRule" id="PRU00267"/>
    </source>
</evidence>
<evidence type="ECO:0000256" key="3">
    <source>
        <dbReference type="SAM" id="MobiDB-lite"/>
    </source>
</evidence>
<evidence type="ECO:0000269" key="4">
    <source>
    </source>
</evidence>
<evidence type="ECO:0000305" key="5">
    <source>
    </source>
</evidence>
<keyword id="KW-0963">Cytoplasm</keyword>
<keyword id="KW-0238">DNA-binding</keyword>
<keyword id="KW-0539">Nucleus</keyword>
<keyword id="KW-1185">Reference proteome</keyword>
<keyword id="KW-0677">Repeat</keyword>
<keyword id="KW-0853">WD repeat</keyword>
<feature type="chain" id="PRO_0000051340" description="WD repeat and HMG-box DNA-binding protein 1">
    <location>
        <begin position="1"/>
        <end position="1127"/>
    </location>
</feature>
<feature type="repeat" description="WD 1">
    <location>
        <begin position="11"/>
        <end position="50"/>
    </location>
</feature>
<feature type="repeat" description="WD 2">
    <location>
        <begin position="52"/>
        <end position="91"/>
    </location>
</feature>
<feature type="repeat" description="WD 3">
    <location>
        <begin position="92"/>
        <end position="131"/>
    </location>
</feature>
<feature type="repeat" description="WD 4">
    <location>
        <begin position="134"/>
        <end position="173"/>
    </location>
</feature>
<feature type="repeat" description="WD 5">
    <location>
        <begin position="184"/>
        <end position="223"/>
    </location>
</feature>
<feature type="repeat" description="WD 6">
    <location>
        <begin position="228"/>
        <end position="267"/>
    </location>
</feature>
<feature type="repeat" description="WD 7">
    <location>
        <begin position="271"/>
        <end position="310"/>
    </location>
</feature>
<feature type="DNA-binding region" description="HMG box" evidence="2">
    <location>
        <begin position="1013"/>
        <end position="1076"/>
    </location>
</feature>
<feature type="region of interest" description="Disordered" evidence="3">
    <location>
        <begin position="811"/>
        <end position="1013"/>
    </location>
</feature>
<feature type="region of interest" description="Disordered" evidence="3">
    <location>
        <begin position="1064"/>
        <end position="1127"/>
    </location>
</feature>
<feature type="compositionally biased region" description="Acidic residues" evidence="3">
    <location>
        <begin position="819"/>
        <end position="829"/>
    </location>
</feature>
<feature type="compositionally biased region" description="Basic and acidic residues" evidence="3">
    <location>
        <begin position="846"/>
        <end position="857"/>
    </location>
</feature>
<feature type="compositionally biased region" description="Acidic residues" evidence="3">
    <location>
        <begin position="858"/>
        <end position="877"/>
    </location>
</feature>
<feature type="compositionally biased region" description="Polar residues" evidence="3">
    <location>
        <begin position="881"/>
        <end position="891"/>
    </location>
</feature>
<feature type="compositionally biased region" description="Polar residues" evidence="3">
    <location>
        <begin position="918"/>
        <end position="937"/>
    </location>
</feature>
<feature type="compositionally biased region" description="Low complexity" evidence="3">
    <location>
        <begin position="948"/>
        <end position="960"/>
    </location>
</feature>
<feature type="compositionally biased region" description="Polar residues" evidence="3">
    <location>
        <begin position="1087"/>
        <end position="1100"/>
    </location>
</feature>
<sequence>MPAIKKNMRYGHPEGHTDVCFDDSGNFLVTCGSDGDIRIWESLDDDDPKSISIGEKAYSFALKNGKVVTAASNNAIQLHTFPDGEPDGILTRFTTNANHVVFNTDGTRIAAGSGDFLVKVLQVEDSTQQKTLRGHSAPVLSVSFDPKDIYLASASCDGSVRIWKISDQTCEAVLPLLEKCNDVFNAKSICRLAWQPKSGKFVAIPVGKAVHLYDRDSLKNICTLSDDFITQPVNIVAWSPCGQYLVAGSVDGCIVAWNIATKACLERIKHEKGYTICALAWHPHLPQIAYTDNEGNLGLLEDVCQGDVKQPSAKVSSAETKDYDELFDGDDDEDFLNGDMIGHEGAVNDEDDDDNFTALTGRPRNRGAIFDDDISSDVPSLKLVGNENPVVEDDQASSVQNFTSVASVKLSYNGPMPTPQQKPFQSGSTPVHLMHRFMVWNSVGVIRCYNDEQDNAIDVEFHDTSIHHAIHLTNSLNHTLADVSQEAVLLACETTEELASKLQCLHFSSWDTSKEWMVDMPKGENIQAICLGQGWVACATSALLIRIFSVGGVQKELISLFGPVVCMASHGEQLIVVYHRGMGFDGDQCLGVQLLELGKKKKQVLHGDPLPLSRKSYLSWLGFTAEGSPCYVDSEGIVRLLNRSLGDTWVPICNTREHCKGKSDHYWVVGIHENPQQVRCIPCKGSRFPPTLPRPAVAVLPFNLPYCQITTEKGQMEEQYWRSQIFSNHSDYLSKHGYECDENFKAEAQKMQQELLMKMFALSCKLEREFRCMELAEFMTQNVMNLAIKYASRSKRLILAQRLSEMALEKAAEQASAEQNEEEDEEEEDFRSRLTAGYSRTATEWGDSRAKPVKQDQYEENNEEEMEEEEKEQEEALESNTPTANPFNKSVKTPDVSESKLGAILSSNQGRVNPFKVSASQKSPAFASNSSRSTSILDNMGKFPRKPSASGSPSTSKSDSVIIKPLAPKAKSKQGQATLFHSVQAKPIAKKTTEEKKAVPTPPKAAADIAENKKPKTGFQLWLDENRPSILSENAGLDESEIIKEGMSRFRMLTSEERMLWTEKAKGDYPGEDGADAKKRKRPEQENMASNGCPQENTDSGIAAAKKHKPLGQSANNKLSAFAFKKE</sequence>
<gene>
    <name type="primary">wdhd1</name>
</gene>
<name>WDHD1_XENLA</name>
<organism>
    <name type="scientific">Xenopus laevis</name>
    <name type="common">African clawed frog</name>
    <dbReference type="NCBI Taxonomy" id="8355"/>
    <lineage>
        <taxon>Eukaryota</taxon>
        <taxon>Metazoa</taxon>
        <taxon>Chordata</taxon>
        <taxon>Craniata</taxon>
        <taxon>Vertebrata</taxon>
        <taxon>Euteleostomi</taxon>
        <taxon>Amphibia</taxon>
        <taxon>Batrachia</taxon>
        <taxon>Anura</taxon>
        <taxon>Pipoidea</taxon>
        <taxon>Pipidae</taxon>
        <taxon>Xenopodinae</taxon>
        <taxon>Xenopus</taxon>
        <taxon>Xenopus</taxon>
    </lineage>
</organism>
<accession>O13046</accession>